<proteinExistence type="inferred from homology"/>
<keyword id="KW-0325">Glycoprotein</keyword>
<keyword id="KW-0326">Glycosidase</keyword>
<keyword id="KW-0378">Hydrolase</keyword>
<keyword id="KW-0611">Plant defense</keyword>
<keyword id="KW-0732">Signal</keyword>
<keyword id="KW-0926">Vacuole</keyword>
<evidence type="ECO:0000250" key="1"/>
<evidence type="ECO:0000250" key="2">
    <source>
        <dbReference type="UniProtKB" id="O22317"/>
    </source>
</evidence>
<evidence type="ECO:0000255" key="3"/>
<evidence type="ECO:0000305" key="4"/>
<comment type="function">
    <text>Implicated in the defense of plants against pathogens.</text>
</comment>
<comment type="catalytic activity">
    <reaction>
        <text>Hydrolysis of (1-&gt;3)-beta-D-glucosidic linkages in (1-&gt;3)-beta-D-glucans.</text>
        <dbReference type="EC" id="3.2.1.39"/>
    </reaction>
</comment>
<comment type="subcellular location">
    <subcellularLocation>
        <location>Vacuole</location>
    </subcellularLocation>
</comment>
<comment type="similarity">
    <text evidence="4">Belongs to the glycosyl hydrolase 17 family.</text>
</comment>
<name>E13B_NICPL</name>
<feature type="signal peptide">
    <location>
        <begin position="1"/>
        <end position="32"/>
    </location>
</feature>
<feature type="chain" id="PRO_0000011867" description="Glucan endo-1,3-beta-glucosidase, basic vacuolar isoform">
    <location>
        <begin position="33"/>
        <end position="348"/>
    </location>
</feature>
<feature type="propeptide" id="PRO_0000011868" description="Removed in mature form" evidence="1">
    <location>
        <begin position="349"/>
        <end position="365"/>
    </location>
</feature>
<feature type="active site" description="Proton donor" evidence="2">
    <location>
        <position position="128"/>
    </location>
</feature>
<feature type="active site" description="Nucleophile" evidence="2">
    <location>
        <position position="273"/>
    </location>
</feature>
<feature type="glycosylation site" description="N-linked (GlcNAc...) asparagine" evidence="3">
    <location>
        <position position="356"/>
    </location>
</feature>
<gene>
    <name type="primary">GN2</name>
</gene>
<sequence>MSTLHKHNTPQMAAITLLGLLLVASSIEIAGAESIGVCYGMLGNNLPNHWEVIQLYKSRNIGRLRLYDPNHGALQALKGSNIEVMLGLPNSDVKHIASGMEHARWWVQKNVKDFWPDVKIKYIAVGNEISPVTGTSYLTSFLTPAMVNIYKAIGEAGLGNNIKVSTSVDMTLIGNSYPPSQGSFRNDARWFVDPIVGFLRDTRAPLLVNIYPYFSYSGNPGQISLPYSLFTAPNVVVQDGSRQYRNLFDAMLDSVYAALERSGGASVGIVVSESGWPSAGAFGATYDNAATYLKNLIQHAKEGSPRKPRPIETYIFAMFDENNKNPELEKHFGLFSPNKQPKYNLNFGVSGSVETNATASLISEI</sequence>
<organism>
    <name type="scientific">Nicotiana plumbaginifolia</name>
    <name type="common">Leadwort-leaved tobacco</name>
    <name type="synonym">Tex-Mex tobacco</name>
    <dbReference type="NCBI Taxonomy" id="4092"/>
    <lineage>
        <taxon>Eukaryota</taxon>
        <taxon>Viridiplantae</taxon>
        <taxon>Streptophyta</taxon>
        <taxon>Embryophyta</taxon>
        <taxon>Tracheophyta</taxon>
        <taxon>Spermatophyta</taxon>
        <taxon>Magnoliopsida</taxon>
        <taxon>eudicotyledons</taxon>
        <taxon>Gunneridae</taxon>
        <taxon>Pentapetalae</taxon>
        <taxon>asterids</taxon>
        <taxon>lamiids</taxon>
        <taxon>Solanales</taxon>
        <taxon>Solanaceae</taxon>
        <taxon>Nicotianoideae</taxon>
        <taxon>Nicotianeae</taxon>
        <taxon>Nicotiana</taxon>
    </lineage>
</organism>
<protein>
    <recommendedName>
        <fullName>Glucan endo-1,3-beta-glucosidase, basic vacuolar isoform</fullName>
        <ecNumber>3.2.1.39</ecNumber>
    </recommendedName>
    <alternativeName>
        <fullName>(1-&gt;3)-beta-glucan endohydrolase</fullName>
        <shortName>(1-&gt;3)-beta-glucanase</shortName>
    </alternativeName>
    <alternativeName>
        <fullName>Beta-1,3-endoglucanase, basic</fullName>
    </alternativeName>
</protein>
<accession>P23431</accession>
<dbReference type="EC" id="3.2.1.39"/>
<dbReference type="EMBL" id="X54742">
    <property type="protein sequence ID" value="CAA38540.1"/>
    <property type="molecule type" value="Genomic_DNA"/>
</dbReference>
<dbReference type="PIR" id="S13594">
    <property type="entry name" value="S13594"/>
</dbReference>
<dbReference type="SMR" id="P23431"/>
<dbReference type="CAZy" id="GH17">
    <property type="family name" value="Glycoside Hydrolase Family 17"/>
</dbReference>
<dbReference type="GlyCosmos" id="P23431">
    <property type="glycosylation" value="1 site, No reported glycans"/>
</dbReference>
<dbReference type="GO" id="GO:0005773">
    <property type="term" value="C:vacuole"/>
    <property type="evidence" value="ECO:0007669"/>
    <property type="project" value="UniProtKB-SubCell"/>
</dbReference>
<dbReference type="GO" id="GO:0042973">
    <property type="term" value="F:glucan endo-1,3-beta-D-glucosidase activity"/>
    <property type="evidence" value="ECO:0007669"/>
    <property type="project" value="UniProtKB-EC"/>
</dbReference>
<dbReference type="GO" id="GO:0005975">
    <property type="term" value="P:carbohydrate metabolic process"/>
    <property type="evidence" value="ECO:0007669"/>
    <property type="project" value="InterPro"/>
</dbReference>
<dbReference type="GO" id="GO:0006952">
    <property type="term" value="P:defense response"/>
    <property type="evidence" value="ECO:0007669"/>
    <property type="project" value="UniProtKB-KW"/>
</dbReference>
<dbReference type="FunFam" id="3.20.20.80:FF:000010">
    <property type="entry name" value="glucan endo-1,3-beta-glucosidase, basic"/>
    <property type="match status" value="1"/>
</dbReference>
<dbReference type="Gene3D" id="3.20.20.80">
    <property type="entry name" value="Glycosidases"/>
    <property type="match status" value="1"/>
</dbReference>
<dbReference type="InterPro" id="IPR000490">
    <property type="entry name" value="Glyco_hydro_17"/>
</dbReference>
<dbReference type="InterPro" id="IPR044965">
    <property type="entry name" value="Glyco_hydro_17_plant"/>
</dbReference>
<dbReference type="InterPro" id="IPR017853">
    <property type="entry name" value="Glycoside_hydrolase_SF"/>
</dbReference>
<dbReference type="PANTHER" id="PTHR32227">
    <property type="entry name" value="GLUCAN ENDO-1,3-BETA-GLUCOSIDASE BG1-RELATED-RELATED"/>
    <property type="match status" value="1"/>
</dbReference>
<dbReference type="Pfam" id="PF00332">
    <property type="entry name" value="Glyco_hydro_17"/>
    <property type="match status" value="1"/>
</dbReference>
<dbReference type="SUPFAM" id="SSF51445">
    <property type="entry name" value="(Trans)glycosidases"/>
    <property type="match status" value="1"/>
</dbReference>
<dbReference type="PROSITE" id="PS00587">
    <property type="entry name" value="GLYCOSYL_HYDROL_F17"/>
    <property type="match status" value="1"/>
</dbReference>
<reference key="1">
    <citation type="journal article" date="1990" name="Nucleic Acids Res.">
        <title>Sequence of a Nicotiana plumbaginifolia beta(1,3)-glucanase gene encoding a vacuolar isoform.</title>
        <authorList>
            <person name="Gheysen G.D."/>
            <person name="Inze D."/>
            <person name="Soetaert P."/>
            <person name="van Montagu M."/>
            <person name="Castresana C."/>
        </authorList>
    </citation>
    <scope>NUCLEOTIDE SEQUENCE [GENOMIC DNA]</scope>
</reference>